<gene>
    <name evidence="1" type="primary">panD</name>
    <name type="ordered locus">FTT_1391</name>
</gene>
<keyword id="KW-0002">3D-structure</keyword>
<keyword id="KW-0068">Autocatalytic cleavage</keyword>
<keyword id="KW-0963">Cytoplasm</keyword>
<keyword id="KW-0210">Decarboxylase</keyword>
<keyword id="KW-0456">Lyase</keyword>
<keyword id="KW-0566">Pantothenate biosynthesis</keyword>
<keyword id="KW-0670">Pyruvate</keyword>
<keyword id="KW-1185">Reference proteome</keyword>
<keyword id="KW-0704">Schiff base</keyword>
<keyword id="KW-0865">Zymogen</keyword>
<organism>
    <name type="scientific">Francisella tularensis subsp. tularensis (strain SCHU S4 / Schu 4)</name>
    <dbReference type="NCBI Taxonomy" id="177416"/>
    <lineage>
        <taxon>Bacteria</taxon>
        <taxon>Pseudomonadati</taxon>
        <taxon>Pseudomonadota</taxon>
        <taxon>Gammaproteobacteria</taxon>
        <taxon>Thiotrichales</taxon>
        <taxon>Francisellaceae</taxon>
        <taxon>Francisella</taxon>
    </lineage>
</organism>
<evidence type="ECO:0000255" key="1">
    <source>
        <dbReference type="HAMAP-Rule" id="MF_00446"/>
    </source>
</evidence>
<evidence type="ECO:0007829" key="2">
    <source>
        <dbReference type="PDB" id="3OUG"/>
    </source>
</evidence>
<accession>Q5NF56</accession>
<dbReference type="EC" id="4.1.1.11" evidence="1"/>
<dbReference type="EMBL" id="AJ749949">
    <property type="protein sequence ID" value="CAG46024.1"/>
    <property type="molecule type" value="Genomic_DNA"/>
</dbReference>
<dbReference type="RefSeq" id="WP_003022192.1">
    <property type="nucleotide sequence ID" value="NZ_CP010290.1"/>
</dbReference>
<dbReference type="RefSeq" id="YP_170336.1">
    <property type="nucleotide sequence ID" value="NC_006570.2"/>
</dbReference>
<dbReference type="PDB" id="3OUG">
    <property type="method" value="X-ray"/>
    <property type="resolution" value="1.55 A"/>
    <property type="chains" value="A/B/C/E/F/G/H/I=1-111"/>
</dbReference>
<dbReference type="PDBsum" id="3OUG"/>
<dbReference type="SMR" id="Q5NF56"/>
<dbReference type="STRING" id="177416.FTT_1391"/>
<dbReference type="DNASU" id="3191388"/>
<dbReference type="EnsemblBacteria" id="CAG46024">
    <property type="protein sequence ID" value="CAG46024"/>
    <property type="gene ID" value="FTT_1391"/>
</dbReference>
<dbReference type="KEGG" id="ftu:FTT_1391"/>
<dbReference type="eggNOG" id="COG0853">
    <property type="taxonomic scope" value="Bacteria"/>
</dbReference>
<dbReference type="OrthoDB" id="9803983at2"/>
<dbReference type="UniPathway" id="UPA00028">
    <property type="reaction ID" value="UER00002"/>
</dbReference>
<dbReference type="EvolutionaryTrace" id="Q5NF56"/>
<dbReference type="Proteomes" id="UP000001174">
    <property type="component" value="Chromosome"/>
</dbReference>
<dbReference type="GO" id="GO:0005829">
    <property type="term" value="C:cytosol"/>
    <property type="evidence" value="ECO:0007669"/>
    <property type="project" value="TreeGrafter"/>
</dbReference>
<dbReference type="GO" id="GO:0004068">
    <property type="term" value="F:aspartate 1-decarboxylase activity"/>
    <property type="evidence" value="ECO:0007669"/>
    <property type="project" value="UniProtKB-UniRule"/>
</dbReference>
<dbReference type="GO" id="GO:0006523">
    <property type="term" value="P:alanine biosynthetic process"/>
    <property type="evidence" value="ECO:0007669"/>
    <property type="project" value="InterPro"/>
</dbReference>
<dbReference type="GO" id="GO:0015940">
    <property type="term" value="P:pantothenate biosynthetic process"/>
    <property type="evidence" value="ECO:0007669"/>
    <property type="project" value="UniProtKB-UniRule"/>
</dbReference>
<dbReference type="CDD" id="cd06919">
    <property type="entry name" value="Asp_decarbox"/>
    <property type="match status" value="1"/>
</dbReference>
<dbReference type="Gene3D" id="2.40.40.20">
    <property type="match status" value="1"/>
</dbReference>
<dbReference type="HAMAP" id="MF_00446">
    <property type="entry name" value="PanD"/>
    <property type="match status" value="1"/>
</dbReference>
<dbReference type="InterPro" id="IPR009010">
    <property type="entry name" value="Asp_de-COase-like_dom_sf"/>
</dbReference>
<dbReference type="InterPro" id="IPR003190">
    <property type="entry name" value="Asp_decarbox"/>
</dbReference>
<dbReference type="NCBIfam" id="TIGR00223">
    <property type="entry name" value="panD"/>
    <property type="match status" value="1"/>
</dbReference>
<dbReference type="PANTHER" id="PTHR21012">
    <property type="entry name" value="ASPARTATE 1-DECARBOXYLASE"/>
    <property type="match status" value="1"/>
</dbReference>
<dbReference type="PANTHER" id="PTHR21012:SF0">
    <property type="entry name" value="ASPARTATE 1-DECARBOXYLASE"/>
    <property type="match status" value="1"/>
</dbReference>
<dbReference type="Pfam" id="PF02261">
    <property type="entry name" value="Asp_decarbox"/>
    <property type="match status" value="1"/>
</dbReference>
<dbReference type="PIRSF" id="PIRSF006246">
    <property type="entry name" value="Asp_decarbox"/>
    <property type="match status" value="1"/>
</dbReference>
<dbReference type="SUPFAM" id="SSF50692">
    <property type="entry name" value="ADC-like"/>
    <property type="match status" value="1"/>
</dbReference>
<feature type="chain" id="PRO_0000306981" description="Aspartate 1-decarboxylase beta chain" evidence="1">
    <location>
        <begin position="1"/>
        <end position="24"/>
    </location>
</feature>
<feature type="chain" id="PRO_0000306982" description="Aspartate 1-decarboxylase alpha chain" evidence="1">
    <location>
        <begin position="25"/>
        <end position="111"/>
    </location>
</feature>
<feature type="active site" description="Schiff-base intermediate with substrate; via pyruvic acid" evidence="1">
    <location>
        <position position="25"/>
    </location>
</feature>
<feature type="active site" description="Proton donor" evidence="1">
    <location>
        <position position="58"/>
    </location>
</feature>
<feature type="binding site" evidence="1">
    <location>
        <position position="57"/>
    </location>
    <ligand>
        <name>substrate</name>
    </ligand>
</feature>
<feature type="binding site" evidence="1">
    <location>
        <begin position="73"/>
        <end position="75"/>
    </location>
    <ligand>
        <name>substrate</name>
    </ligand>
</feature>
<feature type="modified residue" description="Pyruvic acid (Ser)" evidence="1">
    <location>
        <position position="25"/>
    </location>
</feature>
<feature type="strand" evidence="2">
    <location>
        <begin position="2"/>
        <end position="14"/>
    </location>
</feature>
<feature type="strand" evidence="2">
    <location>
        <begin position="17"/>
        <end position="21"/>
    </location>
</feature>
<feature type="strand" evidence="2">
    <location>
        <begin position="26"/>
        <end position="29"/>
    </location>
</feature>
<feature type="helix" evidence="2">
    <location>
        <begin position="30"/>
        <end position="35"/>
    </location>
</feature>
<feature type="strand" evidence="2">
    <location>
        <begin position="42"/>
        <end position="48"/>
    </location>
</feature>
<feature type="turn" evidence="2">
    <location>
        <begin position="49"/>
        <end position="51"/>
    </location>
</feature>
<feature type="strand" evidence="2">
    <location>
        <begin position="54"/>
        <end position="62"/>
    </location>
</feature>
<feature type="strand" evidence="2">
    <location>
        <begin position="69"/>
        <end position="72"/>
    </location>
</feature>
<feature type="helix" evidence="2">
    <location>
        <begin position="73"/>
        <end position="78"/>
    </location>
</feature>
<feature type="strand" evidence="2">
    <location>
        <begin position="84"/>
        <end position="93"/>
    </location>
</feature>
<feature type="strand" evidence="2">
    <location>
        <begin position="103"/>
        <end position="106"/>
    </location>
</feature>
<reference key="1">
    <citation type="journal article" date="2005" name="Nat. Genet.">
        <title>The complete genome sequence of Francisella tularensis, the causative agent of tularemia.</title>
        <authorList>
            <person name="Larsson P."/>
            <person name="Oyston P.C.F."/>
            <person name="Chain P."/>
            <person name="Chu M.C."/>
            <person name="Duffield M."/>
            <person name="Fuxelius H.-H."/>
            <person name="Garcia E."/>
            <person name="Haelltorp G."/>
            <person name="Johansson D."/>
            <person name="Isherwood K.E."/>
            <person name="Karp P.D."/>
            <person name="Larsson E."/>
            <person name="Liu Y."/>
            <person name="Michell S."/>
            <person name="Prior J."/>
            <person name="Prior R."/>
            <person name="Malfatti S."/>
            <person name="Sjoestedt A."/>
            <person name="Svensson K."/>
            <person name="Thompson N."/>
            <person name="Vergez L."/>
            <person name="Wagg J.K."/>
            <person name="Wren B.W."/>
            <person name="Lindler L.E."/>
            <person name="Andersson S.G.E."/>
            <person name="Forsman M."/>
            <person name="Titball R.W."/>
        </authorList>
    </citation>
    <scope>NUCLEOTIDE SEQUENCE [LARGE SCALE GENOMIC DNA]</scope>
    <source>
        <strain>SCHU S4 / Schu 4</strain>
    </source>
</reference>
<proteinExistence type="evidence at protein level"/>
<sequence length="111" mass="12329">MLISVLKSKISYATVTGKDLFYVGSITIDSEIMKQANIIENEKVQVVNLNNGERLETYVIKGEPNSKTIALNGPAARRCEIGDQLFIISYTQVDPTRENIKPKLVDLKTGD</sequence>
<protein>
    <recommendedName>
        <fullName evidence="1">Aspartate 1-decarboxylase</fullName>
        <ecNumber evidence="1">4.1.1.11</ecNumber>
    </recommendedName>
    <alternativeName>
        <fullName evidence="1">Aspartate alpha-decarboxylase</fullName>
    </alternativeName>
    <component>
        <recommendedName>
            <fullName evidence="1">Aspartate 1-decarboxylase beta chain</fullName>
        </recommendedName>
    </component>
    <component>
        <recommendedName>
            <fullName evidence="1">Aspartate 1-decarboxylase alpha chain</fullName>
        </recommendedName>
    </component>
</protein>
<comment type="function">
    <text evidence="1">Catalyzes the pyruvoyl-dependent decarboxylation of aspartate to produce beta-alanine.</text>
</comment>
<comment type="catalytic activity">
    <reaction evidence="1">
        <text>L-aspartate + H(+) = beta-alanine + CO2</text>
        <dbReference type="Rhea" id="RHEA:19497"/>
        <dbReference type="ChEBI" id="CHEBI:15378"/>
        <dbReference type="ChEBI" id="CHEBI:16526"/>
        <dbReference type="ChEBI" id="CHEBI:29991"/>
        <dbReference type="ChEBI" id="CHEBI:57966"/>
        <dbReference type="EC" id="4.1.1.11"/>
    </reaction>
</comment>
<comment type="cofactor">
    <cofactor evidence="1">
        <name>pyruvate</name>
        <dbReference type="ChEBI" id="CHEBI:15361"/>
    </cofactor>
    <text evidence="1">Binds 1 pyruvoyl group covalently per subunit.</text>
</comment>
<comment type="pathway">
    <text evidence="1">Cofactor biosynthesis; (R)-pantothenate biosynthesis; beta-alanine from L-aspartate: step 1/1.</text>
</comment>
<comment type="subunit">
    <text evidence="1">Heterooctamer of four alpha and four beta subunits.</text>
</comment>
<comment type="subcellular location">
    <subcellularLocation>
        <location evidence="1">Cytoplasm</location>
    </subcellularLocation>
</comment>
<comment type="PTM">
    <text evidence="1">Is synthesized initially as an inactive proenzyme, which is activated by self-cleavage at a specific serine bond to produce a beta-subunit with a hydroxyl group at its C-terminus and an alpha-subunit with a pyruvoyl group at its N-terminus.</text>
</comment>
<comment type="similarity">
    <text evidence="1">Belongs to the PanD family.</text>
</comment>
<name>PAND_FRATT</name>